<proteinExistence type="evidence at transcript level"/>
<comment type="function">
    <text evidence="1">Component of the elongator complex which is required for multiple tRNA modifications, including mcm5U (5-methoxycarbonylmethyl uridine), mcm5s2U (5-methoxycarbonylmethyl-2-thiouridine), and ncm5U (5-carbamoylmethyl uridine) (By similarity). The elongator complex catalyzes the formation of carboxymethyluridine in the wobble base at position 34 in tRNAs (By similarity).</text>
</comment>
<comment type="pathway">
    <text evidence="1">tRNA modification; 5-methoxycarbonylmethyl-2-thiouridine-tRNA biosynthesis.</text>
</comment>
<comment type="subunit">
    <text evidence="1">Component of the elongator complex.</text>
</comment>
<comment type="subcellular location">
    <subcellularLocation>
        <location evidence="1">Nucleus</location>
    </subcellularLocation>
    <subcellularLocation>
        <location evidence="1">Cytoplasm</location>
    </subcellularLocation>
</comment>
<comment type="similarity">
    <text evidence="3">Belongs to the ELP5 family.</text>
</comment>
<comment type="caution">
    <text evidence="1">The elongator complex was originally thought to play a role in transcription elongation. However, it is no longer thought to play a direct role in this process and its primary function is thought to be in tRNA modification.</text>
</comment>
<keyword id="KW-0963">Cytoplasm</keyword>
<keyword id="KW-0539">Nucleus</keyword>
<keyword id="KW-1185">Reference proteome</keyword>
<keyword id="KW-0819">tRNA processing</keyword>
<organism>
    <name type="scientific">Danio rerio</name>
    <name type="common">Zebrafish</name>
    <name type="synonym">Brachydanio rerio</name>
    <dbReference type="NCBI Taxonomy" id="7955"/>
    <lineage>
        <taxon>Eukaryota</taxon>
        <taxon>Metazoa</taxon>
        <taxon>Chordata</taxon>
        <taxon>Craniata</taxon>
        <taxon>Vertebrata</taxon>
        <taxon>Euteleostomi</taxon>
        <taxon>Actinopterygii</taxon>
        <taxon>Neopterygii</taxon>
        <taxon>Teleostei</taxon>
        <taxon>Ostariophysi</taxon>
        <taxon>Cypriniformes</taxon>
        <taxon>Danionidae</taxon>
        <taxon>Danioninae</taxon>
        <taxon>Danio</taxon>
    </lineage>
</organism>
<evidence type="ECO:0000250" key="1">
    <source>
        <dbReference type="UniProtKB" id="Q8TE02"/>
    </source>
</evidence>
<evidence type="ECO:0000256" key="2">
    <source>
        <dbReference type="SAM" id="MobiDB-lite"/>
    </source>
</evidence>
<evidence type="ECO:0000305" key="3"/>
<name>ELP5_DANRE</name>
<protein>
    <recommendedName>
        <fullName>Elongator complex protein 5</fullName>
    </recommendedName>
    <alternativeName>
        <fullName>Dermal papilla-derived protein 6 homolog</fullName>
    </alternativeName>
    <alternativeName>
        <fullName>Retinoic acid-induced protein 12</fullName>
    </alternativeName>
</protein>
<feature type="chain" id="PRO_0000280820" description="Elongator complex protein 5">
    <location>
        <begin position="1"/>
        <end position="296"/>
    </location>
</feature>
<feature type="region of interest" description="Disordered" evidence="2">
    <location>
        <begin position="203"/>
        <end position="232"/>
    </location>
</feature>
<feature type="region of interest" description="Disordered" evidence="2">
    <location>
        <begin position="264"/>
        <end position="296"/>
    </location>
</feature>
<feature type="compositionally biased region" description="Polar residues" evidence="2">
    <location>
        <begin position="203"/>
        <end position="212"/>
    </location>
</feature>
<feature type="compositionally biased region" description="Basic and acidic residues" evidence="2">
    <location>
        <begin position="214"/>
        <end position="224"/>
    </location>
</feature>
<feature type="compositionally biased region" description="Acidic residues" evidence="2">
    <location>
        <begin position="280"/>
        <end position="296"/>
    </location>
</feature>
<sequence length="296" mass="32739">MLLEVLQAAEAGGFILIQDSVQCCGRGILRCCINAALKRDEDVHVLGFESPETEVCAGLDSSFAQKLHFHKGFPDPLGWRGKSSFTVQQFTSQHITQLIRDSQPAKASVLVVDSLSLVLRHHDPVIVCQSLQELRKGGVVKTIIGLLHSDLHLQGIVGIVCHLASTVISVAPTNNERHAVATTTRRTKSGKVMQEEEYFSVSEDATLSVQSKPRQHDRVEKEQDSAEVDPASNLTFNLRLSEEERRAKEKVALPFVFSQEKKSALLRPTPGSGRIMYEPDANDDFDEEDPDDDLDV</sequence>
<dbReference type="EMBL" id="BC128832">
    <property type="protein sequence ID" value="AAI28833.1"/>
    <property type="molecule type" value="mRNA"/>
</dbReference>
<dbReference type="EMBL" id="BC128833">
    <property type="protein sequence ID" value="AAI28834.1"/>
    <property type="molecule type" value="mRNA"/>
</dbReference>
<dbReference type="RefSeq" id="NP_001073536.1">
    <property type="nucleotide sequence ID" value="NM_001080067.2"/>
</dbReference>
<dbReference type="SMR" id="A1A5V9"/>
<dbReference type="FunCoup" id="A1A5V9">
    <property type="interactions" value="948"/>
</dbReference>
<dbReference type="STRING" id="7955.ENSDARP00000151574"/>
<dbReference type="PaxDb" id="7955-ENSDARP00000088643"/>
<dbReference type="PeptideAtlas" id="A1A5V9"/>
<dbReference type="GeneID" id="790921"/>
<dbReference type="KEGG" id="dre:790921"/>
<dbReference type="AGR" id="ZFIN:ZDB-GENE-061215-33"/>
<dbReference type="CTD" id="23587"/>
<dbReference type="ZFIN" id="ZDB-GENE-061215-33">
    <property type="gene designation" value="elp5"/>
</dbReference>
<dbReference type="eggNOG" id="ENOG502QQ2R">
    <property type="taxonomic scope" value="Eukaryota"/>
</dbReference>
<dbReference type="InParanoid" id="A1A5V9"/>
<dbReference type="OrthoDB" id="166907at2759"/>
<dbReference type="UniPathway" id="UPA00988"/>
<dbReference type="PRO" id="PR:A1A5V9"/>
<dbReference type="Proteomes" id="UP000000437">
    <property type="component" value="Chromosome 7"/>
</dbReference>
<dbReference type="GO" id="GO:0005737">
    <property type="term" value="C:cytoplasm"/>
    <property type="evidence" value="ECO:0000250"/>
    <property type="project" value="UniProtKB"/>
</dbReference>
<dbReference type="GO" id="GO:0005829">
    <property type="term" value="C:cytosol"/>
    <property type="evidence" value="ECO:0000318"/>
    <property type="project" value="GO_Central"/>
</dbReference>
<dbReference type="GO" id="GO:0033588">
    <property type="term" value="C:elongator holoenzyme complex"/>
    <property type="evidence" value="ECO:0000250"/>
    <property type="project" value="UniProtKB"/>
</dbReference>
<dbReference type="GO" id="GO:0005634">
    <property type="term" value="C:nucleus"/>
    <property type="evidence" value="ECO:0000250"/>
    <property type="project" value="UniProtKB"/>
</dbReference>
<dbReference type="GO" id="GO:0030335">
    <property type="term" value="P:positive regulation of cell migration"/>
    <property type="evidence" value="ECO:0000250"/>
    <property type="project" value="UniProtKB"/>
</dbReference>
<dbReference type="GO" id="GO:0006400">
    <property type="term" value="P:tRNA modification"/>
    <property type="evidence" value="ECO:0000318"/>
    <property type="project" value="GO_Central"/>
</dbReference>
<dbReference type="GO" id="GO:0002098">
    <property type="term" value="P:tRNA wobble uridine modification"/>
    <property type="evidence" value="ECO:0007669"/>
    <property type="project" value="InterPro"/>
</dbReference>
<dbReference type="CDD" id="cd19496">
    <property type="entry name" value="Elp5"/>
    <property type="match status" value="1"/>
</dbReference>
<dbReference type="FunFam" id="3.40.50.300:FF:005191">
    <property type="entry name" value="Elongator complex protein 5"/>
    <property type="match status" value="1"/>
</dbReference>
<dbReference type="Gene3D" id="3.40.50.300">
    <property type="entry name" value="P-loop containing nucleotide triphosphate hydrolases"/>
    <property type="match status" value="1"/>
</dbReference>
<dbReference type="InterPro" id="IPR019519">
    <property type="entry name" value="Elp5"/>
</dbReference>
<dbReference type="InterPro" id="IPR027417">
    <property type="entry name" value="P-loop_NTPase"/>
</dbReference>
<dbReference type="PANTHER" id="PTHR15641">
    <property type="entry name" value="ELONGATOR COMPLEX PROTEIN 5"/>
    <property type="match status" value="1"/>
</dbReference>
<dbReference type="PANTHER" id="PTHR15641:SF1">
    <property type="entry name" value="ELONGATOR COMPLEX PROTEIN 5"/>
    <property type="match status" value="1"/>
</dbReference>
<dbReference type="Pfam" id="PF10483">
    <property type="entry name" value="Elong_Iki1"/>
    <property type="match status" value="2"/>
</dbReference>
<gene>
    <name type="primary">elp5</name>
    <name type="synonym">derp6</name>
    <name type="synonym">Rai12</name>
    <name type="ORF">zgc:158278</name>
    <name type="ORF">zgc:158285</name>
</gene>
<accession>A1A5V9</accession>
<reference key="1">
    <citation type="submission" date="2006-12" db="EMBL/GenBank/DDBJ databases">
        <authorList>
            <consortium name="NIH - Zebrafish Gene Collection (ZGC) project"/>
        </authorList>
    </citation>
    <scope>NUCLEOTIDE SEQUENCE [LARGE SCALE MRNA]</scope>
    <source>
        <tissue>Kidney</tissue>
    </source>
</reference>